<organism>
    <name type="scientific">Hordeum bulbosum</name>
    <name type="common">Bulbous barley</name>
    <name type="synonym">Critesion bulbosum</name>
    <dbReference type="NCBI Taxonomy" id="4516"/>
    <lineage>
        <taxon>Eukaryota</taxon>
        <taxon>Viridiplantae</taxon>
        <taxon>Streptophyta</taxon>
        <taxon>Embryophyta</taxon>
        <taxon>Tracheophyta</taxon>
        <taxon>Spermatophyta</taxon>
        <taxon>Magnoliopsida</taxon>
        <taxon>Liliopsida</taxon>
        <taxon>Poales</taxon>
        <taxon>Poaceae</taxon>
        <taxon>BOP clade</taxon>
        <taxon>Pooideae</taxon>
        <taxon>Triticodae</taxon>
        <taxon>Triticeae</taxon>
        <taxon>Hordeinae</taxon>
        <taxon>Hordeum</taxon>
    </lineage>
</organism>
<sequence>MVREEVAGSTQTLQWKCVESRVDSKRLYYGRFILSPLRKGQADTVGIALRRALLGEIEGTCITRAKFGSVPHEYSTIAGIEESVQEILLNLKEIVLRSNLYGVRDASICVKGPRYITAQDIILPPSVETVDTAQPIANLTEPIDFCIDLQIKRDRGYQTELRKNYQDGSYPIDAVSMPVRNVNYSIFSCGNGNEKHEILFLEIWTNGSLTPKEALYEASRNLIDLFLPFLHAEEEGTSFEENKNRFTPPLFTFQKRLTNLKKNKKGIPLNCIFIDQLELTSRTYNCLKRANIHTLLDLLSKTEEDLMRIDSFRMEDRKHIWDTLEKHLPIDLLKNKLSF</sequence>
<evidence type="ECO:0000255" key="1">
    <source>
        <dbReference type="HAMAP-Rule" id="MF_00059"/>
    </source>
</evidence>
<keyword id="KW-0150">Chloroplast</keyword>
<keyword id="KW-0240">DNA-directed RNA polymerase</keyword>
<keyword id="KW-0548">Nucleotidyltransferase</keyword>
<keyword id="KW-0934">Plastid</keyword>
<keyword id="KW-0804">Transcription</keyword>
<keyword id="KW-0808">Transferase</keyword>
<dbReference type="EC" id="2.7.7.6" evidence="1"/>
<dbReference type="EMBL" id="AY115919">
    <property type="protein sequence ID" value="AAM97428.1"/>
    <property type="molecule type" value="Genomic_DNA"/>
</dbReference>
<dbReference type="SMR" id="Q7H6J2"/>
<dbReference type="GO" id="GO:0009507">
    <property type="term" value="C:chloroplast"/>
    <property type="evidence" value="ECO:0007669"/>
    <property type="project" value="UniProtKB-SubCell"/>
</dbReference>
<dbReference type="GO" id="GO:0000428">
    <property type="term" value="C:DNA-directed RNA polymerase complex"/>
    <property type="evidence" value="ECO:0007669"/>
    <property type="project" value="UniProtKB-KW"/>
</dbReference>
<dbReference type="GO" id="GO:0005739">
    <property type="term" value="C:mitochondrion"/>
    <property type="evidence" value="ECO:0007669"/>
    <property type="project" value="GOC"/>
</dbReference>
<dbReference type="GO" id="GO:0003677">
    <property type="term" value="F:DNA binding"/>
    <property type="evidence" value="ECO:0007669"/>
    <property type="project" value="UniProtKB-UniRule"/>
</dbReference>
<dbReference type="GO" id="GO:0003899">
    <property type="term" value="F:DNA-directed RNA polymerase activity"/>
    <property type="evidence" value="ECO:0007669"/>
    <property type="project" value="UniProtKB-UniRule"/>
</dbReference>
<dbReference type="GO" id="GO:0046983">
    <property type="term" value="F:protein dimerization activity"/>
    <property type="evidence" value="ECO:0007669"/>
    <property type="project" value="InterPro"/>
</dbReference>
<dbReference type="GO" id="GO:0006351">
    <property type="term" value="P:DNA-templated transcription"/>
    <property type="evidence" value="ECO:0007669"/>
    <property type="project" value="UniProtKB-UniRule"/>
</dbReference>
<dbReference type="CDD" id="cd06928">
    <property type="entry name" value="RNAP_alpha_NTD"/>
    <property type="match status" value="1"/>
</dbReference>
<dbReference type="FunFam" id="1.10.150.20:FF:000021">
    <property type="entry name" value="DNA-directed RNA polymerase subunit alpha"/>
    <property type="match status" value="1"/>
</dbReference>
<dbReference type="FunFam" id="2.170.120.12:FF:000001">
    <property type="entry name" value="DNA-directed RNA polymerase subunit alpha"/>
    <property type="match status" value="1"/>
</dbReference>
<dbReference type="Gene3D" id="1.10.150.20">
    <property type="entry name" value="5' to 3' exonuclease, C-terminal subdomain"/>
    <property type="match status" value="1"/>
</dbReference>
<dbReference type="Gene3D" id="2.170.120.12">
    <property type="entry name" value="DNA-directed RNA polymerase, insert domain"/>
    <property type="match status" value="1"/>
</dbReference>
<dbReference type="Gene3D" id="3.30.1360.10">
    <property type="entry name" value="RNA polymerase, RBP11-like subunit"/>
    <property type="match status" value="1"/>
</dbReference>
<dbReference type="HAMAP" id="MF_00059">
    <property type="entry name" value="RNApol_bact_RpoA"/>
    <property type="match status" value="1"/>
</dbReference>
<dbReference type="InterPro" id="IPR011262">
    <property type="entry name" value="DNA-dir_RNA_pol_insert"/>
</dbReference>
<dbReference type="InterPro" id="IPR011263">
    <property type="entry name" value="DNA-dir_RNA_pol_RpoA/D/Rpb3"/>
</dbReference>
<dbReference type="InterPro" id="IPR011773">
    <property type="entry name" value="DNA-dir_RpoA"/>
</dbReference>
<dbReference type="InterPro" id="IPR036603">
    <property type="entry name" value="RBP11-like"/>
</dbReference>
<dbReference type="InterPro" id="IPR011260">
    <property type="entry name" value="RNAP_asu_C"/>
</dbReference>
<dbReference type="InterPro" id="IPR036643">
    <property type="entry name" value="RNApol_insert_sf"/>
</dbReference>
<dbReference type="NCBIfam" id="TIGR02027">
    <property type="entry name" value="rpoA"/>
    <property type="match status" value="1"/>
</dbReference>
<dbReference type="Pfam" id="PF01000">
    <property type="entry name" value="RNA_pol_A_bac"/>
    <property type="match status" value="1"/>
</dbReference>
<dbReference type="Pfam" id="PF03118">
    <property type="entry name" value="RNA_pol_A_CTD"/>
    <property type="match status" value="1"/>
</dbReference>
<dbReference type="Pfam" id="PF01193">
    <property type="entry name" value="RNA_pol_L"/>
    <property type="match status" value="1"/>
</dbReference>
<dbReference type="SMART" id="SM00662">
    <property type="entry name" value="RPOLD"/>
    <property type="match status" value="1"/>
</dbReference>
<dbReference type="SUPFAM" id="SSF47789">
    <property type="entry name" value="C-terminal domain of RNA polymerase alpha subunit"/>
    <property type="match status" value="1"/>
</dbReference>
<dbReference type="SUPFAM" id="SSF56553">
    <property type="entry name" value="Insert subdomain of RNA polymerase alpha subunit"/>
    <property type="match status" value="1"/>
</dbReference>
<dbReference type="SUPFAM" id="SSF55257">
    <property type="entry name" value="RBP11-like subunits of RNA polymerase"/>
    <property type="match status" value="1"/>
</dbReference>
<accession>Q7H6J2</accession>
<feature type="chain" id="PRO_0000175461" description="DNA-directed RNA polymerase subunit alpha">
    <location>
        <begin position="1"/>
        <end position="339"/>
    </location>
</feature>
<feature type="region of interest" description="Alpha N-terminal domain (alpha-NTD)" evidence="1">
    <location>
        <begin position="1"/>
        <end position="233"/>
    </location>
</feature>
<feature type="region of interest" description="Alpha C-terminal domain (alpha-CTD)" evidence="1">
    <location>
        <begin position="266"/>
        <end position="339"/>
    </location>
</feature>
<reference key="1">
    <citation type="journal article" date="2002" name="Genome">
        <title>Phylogenetic analysis of North American Elymus and the monogenomic Triticeae (Poaceae) using three chloroplast DNA data sets.</title>
        <authorList>
            <person name="Mason-Gamer R.J."/>
            <person name="Orme N.L."/>
            <person name="Anderson C.M."/>
        </authorList>
    </citation>
    <scope>NUCLEOTIDE SEQUENCE [GENOMIC DNA]</scope>
</reference>
<protein>
    <recommendedName>
        <fullName evidence="1">DNA-directed RNA polymerase subunit alpha</fullName>
        <shortName evidence="1">PEP</shortName>
        <ecNumber evidence="1">2.7.7.6</ecNumber>
    </recommendedName>
    <alternativeName>
        <fullName evidence="1">Plastid-encoded RNA polymerase subunit alpha</fullName>
        <shortName evidence="1">RNA polymerase subunit alpha</shortName>
    </alternativeName>
</protein>
<comment type="function">
    <text evidence="1">DNA-dependent RNA polymerase catalyzes the transcription of DNA into RNA using the four ribonucleoside triphosphates as substrates.</text>
</comment>
<comment type="catalytic activity">
    <reaction evidence="1">
        <text>RNA(n) + a ribonucleoside 5'-triphosphate = RNA(n+1) + diphosphate</text>
        <dbReference type="Rhea" id="RHEA:21248"/>
        <dbReference type="Rhea" id="RHEA-COMP:14527"/>
        <dbReference type="Rhea" id="RHEA-COMP:17342"/>
        <dbReference type="ChEBI" id="CHEBI:33019"/>
        <dbReference type="ChEBI" id="CHEBI:61557"/>
        <dbReference type="ChEBI" id="CHEBI:140395"/>
        <dbReference type="EC" id="2.7.7.6"/>
    </reaction>
</comment>
<comment type="subunit">
    <text evidence="1">In plastids the minimal PEP RNA polymerase catalytic core is composed of four subunits: alpha, beta, beta', and beta''. When a (nuclear-encoded) sigma factor is associated with the core the holoenzyme is formed, which can initiate transcription.</text>
</comment>
<comment type="subcellular location">
    <subcellularLocation>
        <location>Plastid</location>
        <location>Chloroplast</location>
    </subcellularLocation>
</comment>
<comment type="domain">
    <text evidence="1">The N-terminal domain is essential for RNAP assembly and basal transcription, whereas the C-terminal domain is involved in interaction with transcriptional regulators and with upstream promoter elements.</text>
</comment>
<comment type="similarity">
    <text evidence="1">Belongs to the RNA polymerase alpha chain family.</text>
</comment>
<proteinExistence type="inferred from homology"/>
<gene>
    <name evidence="1" type="primary">rpoA</name>
</gene>
<name>RPOA_HORBU</name>
<geneLocation type="chloroplast"/>